<gene>
    <name type="ordered locus">At1g74260</name>
    <name type="ORF">F1O17.7</name>
</gene>
<organism>
    <name type="scientific">Arabidopsis thaliana</name>
    <name type="common">Mouse-ear cress</name>
    <dbReference type="NCBI Taxonomy" id="3702"/>
    <lineage>
        <taxon>Eukaryota</taxon>
        <taxon>Viridiplantae</taxon>
        <taxon>Streptophyta</taxon>
        <taxon>Embryophyta</taxon>
        <taxon>Tracheophyta</taxon>
        <taxon>Spermatophyta</taxon>
        <taxon>Magnoliopsida</taxon>
        <taxon>eudicotyledons</taxon>
        <taxon>Gunneridae</taxon>
        <taxon>Pentapetalae</taxon>
        <taxon>rosids</taxon>
        <taxon>malvids</taxon>
        <taxon>Brassicales</taxon>
        <taxon>Brassicaceae</taxon>
        <taxon>Camelineae</taxon>
        <taxon>Arabidopsis</taxon>
    </lineage>
</organism>
<accession>Q9M8D3</accession>
<accession>A9Y5J1</accession>
<accession>F4HTW2</accession>
<evidence type="ECO:0000250" key="1"/>
<evidence type="ECO:0000255" key="2"/>
<evidence type="ECO:0000269" key="3">
    <source>
    </source>
</evidence>
<evidence type="ECO:0000305" key="4"/>
<name>PUR4_ARATH</name>
<proteinExistence type="evidence at transcript level"/>
<protein>
    <recommendedName>
        <fullName>Probable phosphoribosylformylglycinamidine synthase, chloroplastic/mitochondrial</fullName>
        <shortName>FGAM synthase</shortName>
        <shortName>FGAMS</shortName>
        <ecNumber>6.3.5.3</ecNumber>
    </recommendedName>
    <alternativeName>
        <fullName>Formylglycinamide ribonucleotide amidotransferase</fullName>
        <shortName>FGAR amidotransferase</shortName>
        <shortName>FGAR-AT</shortName>
    </alternativeName>
    <alternativeName>
        <fullName>Formylglycinamide ribotide amidotransferase</fullName>
    </alternativeName>
</protein>
<feature type="transit peptide" description="Chloroplast and mitochondrion" evidence="2">
    <location>
        <begin position="1"/>
        <end position="53"/>
    </location>
</feature>
<feature type="chain" id="PRO_0000029880" description="Probable phosphoribosylformylglycinamidine synthase, chloroplastic/mitochondrial">
    <location>
        <begin position="54"/>
        <end position="1407"/>
    </location>
</feature>
<feature type="domain" description="Glutamine amidotransferase type-1">
    <location>
        <begin position="1141"/>
        <end position="1381"/>
    </location>
</feature>
<feature type="active site" description="Nucleophile" evidence="1">
    <location>
        <position position="1235"/>
    </location>
</feature>
<feature type="active site" evidence="1">
    <location>
        <position position="1366"/>
    </location>
</feature>
<feature type="active site" evidence="1">
    <location>
        <position position="1368"/>
    </location>
</feature>
<feature type="binding site" evidence="2">
    <location>
        <begin position="407"/>
        <end position="418"/>
    </location>
    <ligand>
        <name>ATP</name>
        <dbReference type="ChEBI" id="CHEBI:30616"/>
    </ligand>
</feature>
<feature type="binding site" evidence="1">
    <location>
        <begin position="487"/>
        <end position="489"/>
    </location>
    <ligand>
        <name>ATP</name>
        <dbReference type="ChEBI" id="CHEBI:30616"/>
    </ligand>
</feature>
<feature type="binding site" evidence="1">
    <location>
        <position position="786"/>
    </location>
    <ligand>
        <name>ATP</name>
        <dbReference type="ChEBI" id="CHEBI:30616"/>
    </ligand>
</feature>
<feature type="binding site" evidence="1">
    <location>
        <position position="787"/>
    </location>
    <ligand>
        <name>Mg(2+)</name>
        <dbReference type="ChEBI" id="CHEBI:18420"/>
    </ligand>
</feature>
<feature type="binding site" evidence="1">
    <location>
        <position position="826"/>
    </location>
    <ligand>
        <name>Mg(2+)</name>
        <dbReference type="ChEBI" id="CHEBI:18420"/>
    </ligand>
</feature>
<feature type="binding site" evidence="1">
    <location>
        <position position="830"/>
    </location>
    <ligand>
        <name>Mg(2+)</name>
        <dbReference type="ChEBI" id="CHEBI:18420"/>
    </ligand>
</feature>
<feature type="binding site" evidence="1">
    <location>
        <position position="989"/>
    </location>
    <ligand>
        <name>Mg(2+)</name>
        <dbReference type="ChEBI" id="CHEBI:18420"/>
    </ligand>
</feature>
<feature type="binding site" evidence="1">
    <location>
        <position position="991"/>
    </location>
    <ligand>
        <name>ATP</name>
        <dbReference type="ChEBI" id="CHEBI:30616"/>
    </ligand>
</feature>
<sequence>MNTSQATRAALFLNGSNRQAMLLQRSSMSQLWGSVRMRTSRLSLNRTKAVSLRCSAQPNKPKAAVSTGSFVTADELPSLVEKPAAEVIHFYRVPLIQESANAELLKAVQTKISNQIVSLTTEQSFNIGLESKLKDEKLSVLKWILQETYEPENLGTDSFLERKKQEGLHAVIVEVGPRLSFTTAWSTNAVSICRACGLDEVTRLERSRRYLLFSKEPLLENQIKEFAAMVHDRMTECVYTQKLVSFETNVVPEEVKYVPVMEKGRKALEEINQEMGLAFDEQDLQYYTRLFREDIKRDPTNVELFDIAQSNSEHSRHWFFAGNMVIDGKPMDKSLMQIVKSTWEANRNNSVIGFKDNSSAIRGFLVNQLRPLLPGSVCLLDVSARDLDILFTAETHNFPCAVAPYPGAETGAGGRIRDTHATGRGSFVVASTSGYCVGNLNMEGSYAPWEDSSFQYPSNLASPLQILIDASNGASDYGNKFGEPMIQGYTRTFGMRLPSGDRREWLKPIMFSAGIGQIDHTHITKGEPEVGMLVVKIGGPAYRIGMGGGAASSMVSGQNDAELDFNAVQRGDAEMSQKLYRVVRACIEMGEKNPIISIHDQGAGGNCNVVKEIIYPQGAEIDIRAVVVGDHTMSVLEIWGAEYQEQDAILVKAESREILQSICKRERLSMAVIGTINGGGRCTLIDSTAAAKCSKEGLPPPPPAVDLELEKVLGDMPKKTFKFNRIAYAREPLDIAPGITLMDALKRVLRLPSVSSKRFLTTKVDRCVTGLVAQQQTVGPLQITLADVAVIAQTFTDLTGGACAIGEQPIKGLLDPKAMARLAVGEALTNLVWAKVTALSDVKASGNWMYAAKLEGEGSAMYDAAIALSEAMIELGIAIDGGKDSLSMAAHADGEVVKAPGNLVISAYVTCPDITKTVTPDLKLGGDDGILLHVDLAKGKRRLGGSALAQVFGQIGNDCPDLDDVPYLKNVFDGVQALIAENLVSAGHDISDGGLVVTALEMAFAGNKGINLDLASNGISLFETLFSEELGLVLEISKTNLDAVMEKLRAFDVTAEIIGNVTDSPLIEVKVDGITHLSEKTSFLRDMWEDTSFQLEKLQRLASCVEMEKEGLKFRHEPNWKLSFIPSSTNNNYMSQDVKPKVAVIREEGSNGDREMSAAFYAAGFEPWDVTVSDLLAGDITLDQFRGIVFVGGFSYADVLDSAKGWAASIRFNEPVLSQFQEFYKRPDTFSLGICNGCQLMALLGWVPGPQVGGSLDTSQPRFVHNESGRFECRFTSVTIKDSPSIMLKGMEGSTLGVWAAHGEGRAYFPDEGVLDHMLHSDLAPLRYCDDDGNVTEAYPFNLNGSPLGIAAICSPDGRHLAMMPHPERCFLMWQFPWYPTSWDVEKAGPSPWLKMFQNARDWLESC</sequence>
<dbReference type="EC" id="6.3.5.3"/>
<dbReference type="EMBL" id="EU091297">
    <property type="protein sequence ID" value="ABW87767.1"/>
    <property type="status" value="ALT_INIT"/>
    <property type="molecule type" value="mRNA"/>
</dbReference>
<dbReference type="EMBL" id="AC020579">
    <property type="protein sequence ID" value="AAG52403.1"/>
    <property type="status" value="ALT_SEQ"/>
    <property type="molecule type" value="Genomic_DNA"/>
</dbReference>
<dbReference type="EMBL" id="CP002684">
    <property type="protein sequence ID" value="AEE35571.1"/>
    <property type="molecule type" value="Genomic_DNA"/>
</dbReference>
<dbReference type="PIR" id="A96771">
    <property type="entry name" value="A96771"/>
</dbReference>
<dbReference type="RefSeq" id="NP_177566.3">
    <property type="nucleotide sequence ID" value="NM_106086.5"/>
</dbReference>
<dbReference type="SMR" id="Q9M8D3"/>
<dbReference type="BioGRID" id="28985">
    <property type="interactions" value="9"/>
</dbReference>
<dbReference type="FunCoup" id="Q9M8D3">
    <property type="interactions" value="4118"/>
</dbReference>
<dbReference type="STRING" id="3702.Q9M8D3"/>
<dbReference type="MEROPS" id="C56.972"/>
<dbReference type="PaxDb" id="3702-AT1G74260.1"/>
<dbReference type="ProteomicsDB" id="224869"/>
<dbReference type="EnsemblPlants" id="AT1G74260.1">
    <property type="protein sequence ID" value="AT1G74260.1"/>
    <property type="gene ID" value="AT1G74260"/>
</dbReference>
<dbReference type="GeneID" id="843766"/>
<dbReference type="Gramene" id="AT1G74260.1">
    <property type="protein sequence ID" value="AT1G74260.1"/>
    <property type="gene ID" value="AT1G74260"/>
</dbReference>
<dbReference type="KEGG" id="ath:AT1G74260"/>
<dbReference type="Araport" id="AT1G74260"/>
<dbReference type="TAIR" id="AT1G74260">
    <property type="gene designation" value="PUR4"/>
</dbReference>
<dbReference type="eggNOG" id="KOG1907">
    <property type="taxonomic scope" value="Eukaryota"/>
</dbReference>
<dbReference type="HOGENOM" id="CLU_001031_0_0_1"/>
<dbReference type="InParanoid" id="Q9M8D3"/>
<dbReference type="OMA" id="LSANWMW"/>
<dbReference type="BioCyc" id="ARA:AT1G74260-MONOMER"/>
<dbReference type="UniPathway" id="UPA00074">
    <property type="reaction ID" value="UER00128"/>
</dbReference>
<dbReference type="PRO" id="PR:Q9M8D3"/>
<dbReference type="Proteomes" id="UP000006548">
    <property type="component" value="Chromosome 1"/>
</dbReference>
<dbReference type="ExpressionAtlas" id="Q9M8D3">
    <property type="expression patterns" value="baseline and differential"/>
</dbReference>
<dbReference type="GO" id="GO:0009507">
    <property type="term" value="C:chloroplast"/>
    <property type="evidence" value="ECO:0000314"/>
    <property type="project" value="TAIR"/>
</dbReference>
<dbReference type="GO" id="GO:0009570">
    <property type="term" value="C:chloroplast stroma"/>
    <property type="evidence" value="ECO:0007005"/>
    <property type="project" value="TAIR"/>
</dbReference>
<dbReference type="GO" id="GO:0005739">
    <property type="term" value="C:mitochondrion"/>
    <property type="evidence" value="ECO:0000314"/>
    <property type="project" value="TAIR"/>
</dbReference>
<dbReference type="GO" id="GO:0005524">
    <property type="term" value="F:ATP binding"/>
    <property type="evidence" value="ECO:0007005"/>
    <property type="project" value="TAIR"/>
</dbReference>
<dbReference type="GO" id="GO:0046872">
    <property type="term" value="F:metal ion binding"/>
    <property type="evidence" value="ECO:0007669"/>
    <property type="project" value="UniProtKB-KW"/>
</dbReference>
<dbReference type="GO" id="GO:0004642">
    <property type="term" value="F:phosphoribosylformylglycinamidine synthase activity"/>
    <property type="evidence" value="ECO:0000304"/>
    <property type="project" value="TAIR"/>
</dbReference>
<dbReference type="GO" id="GO:0006189">
    <property type="term" value="P:'de novo' IMP biosynthetic process"/>
    <property type="evidence" value="ECO:0007669"/>
    <property type="project" value="UniProtKB-UniPathway"/>
</dbReference>
<dbReference type="GO" id="GO:0055046">
    <property type="term" value="P:microgametogenesis"/>
    <property type="evidence" value="ECO:0000315"/>
    <property type="project" value="TAIR"/>
</dbReference>
<dbReference type="GO" id="GO:0009555">
    <property type="term" value="P:pollen development"/>
    <property type="evidence" value="ECO:0000315"/>
    <property type="project" value="TAIR"/>
</dbReference>
<dbReference type="CDD" id="cd01740">
    <property type="entry name" value="GATase1_FGAR_AT"/>
    <property type="match status" value="1"/>
</dbReference>
<dbReference type="CDD" id="cd02203">
    <property type="entry name" value="PurL_repeat1"/>
    <property type="match status" value="1"/>
</dbReference>
<dbReference type="CDD" id="cd02204">
    <property type="entry name" value="PurL_repeat2"/>
    <property type="match status" value="1"/>
</dbReference>
<dbReference type="FunFam" id="3.30.1330.10:FF:000007">
    <property type="entry name" value="Phosphoribosylformylglycinamidine synthase, putative"/>
    <property type="match status" value="1"/>
</dbReference>
<dbReference type="FunFam" id="3.40.50.880:FF:000014">
    <property type="entry name" value="Phosphoribosylformylglycinamidine synthase, putative"/>
    <property type="match status" value="1"/>
</dbReference>
<dbReference type="FunFam" id="3.90.650.10:FF:000006">
    <property type="entry name" value="Phosphoribosylformylglycinamidine synthase, putative"/>
    <property type="match status" value="1"/>
</dbReference>
<dbReference type="FunFam" id="3.30.1330.10:FF:000009">
    <property type="entry name" value="Probable phosphoribosylformylglycinamidine synthase"/>
    <property type="match status" value="1"/>
</dbReference>
<dbReference type="FunFam" id="3.90.650.10:FF:000017">
    <property type="entry name" value="Probable phosphoribosylformylglycinamidine synthase, chloroplastic/mitochondrial"/>
    <property type="match status" value="1"/>
</dbReference>
<dbReference type="FunFam" id="1.10.8.750:FF:000001">
    <property type="entry name" value="Putative phosphoribosylformylglycinamidine synthase"/>
    <property type="match status" value="1"/>
</dbReference>
<dbReference type="Gene3D" id="3.40.50.880">
    <property type="match status" value="1"/>
</dbReference>
<dbReference type="Gene3D" id="1.10.8.750">
    <property type="entry name" value="Phosphoribosylformylglycinamidine synthase, linker domain"/>
    <property type="match status" value="1"/>
</dbReference>
<dbReference type="Gene3D" id="3.90.650.10">
    <property type="entry name" value="PurM-like C-terminal domain"/>
    <property type="match status" value="2"/>
</dbReference>
<dbReference type="Gene3D" id="3.30.1330.10">
    <property type="entry name" value="PurM-like, N-terminal domain"/>
    <property type="match status" value="2"/>
</dbReference>
<dbReference type="HAMAP" id="MF_00419">
    <property type="entry name" value="PurL_1"/>
    <property type="match status" value="1"/>
</dbReference>
<dbReference type="InterPro" id="IPR029062">
    <property type="entry name" value="Class_I_gatase-like"/>
</dbReference>
<dbReference type="InterPro" id="IPR040707">
    <property type="entry name" value="FGAR-AT_N"/>
</dbReference>
<dbReference type="InterPro" id="IPR055181">
    <property type="entry name" value="FGAR-AT_PurM_N-like"/>
</dbReference>
<dbReference type="InterPro" id="IPR010073">
    <property type="entry name" value="PurL_large"/>
</dbReference>
<dbReference type="InterPro" id="IPR041609">
    <property type="entry name" value="PurL_linker"/>
</dbReference>
<dbReference type="InterPro" id="IPR010918">
    <property type="entry name" value="PurM-like_C_dom"/>
</dbReference>
<dbReference type="InterPro" id="IPR036676">
    <property type="entry name" value="PurM-like_C_sf"/>
</dbReference>
<dbReference type="InterPro" id="IPR036921">
    <property type="entry name" value="PurM-like_N_sf"/>
</dbReference>
<dbReference type="InterPro" id="IPR036604">
    <property type="entry name" value="PurS-like_sf"/>
</dbReference>
<dbReference type="NCBIfam" id="TIGR01735">
    <property type="entry name" value="FGAM_synt"/>
    <property type="match status" value="1"/>
</dbReference>
<dbReference type="NCBIfam" id="NF003672">
    <property type="entry name" value="PRK05297.1"/>
    <property type="match status" value="1"/>
</dbReference>
<dbReference type="PANTHER" id="PTHR10099">
    <property type="entry name" value="PHOSPHORIBOSYLFORMYLGLYCINAMIDINE SYNTHASE"/>
    <property type="match status" value="1"/>
</dbReference>
<dbReference type="PANTHER" id="PTHR10099:SF1">
    <property type="entry name" value="PHOSPHORIBOSYLFORMYLGLYCINAMIDINE SYNTHASE"/>
    <property type="match status" value="1"/>
</dbReference>
<dbReference type="Pfam" id="PF02769">
    <property type="entry name" value="AIRS_C"/>
    <property type="match status" value="2"/>
</dbReference>
<dbReference type="Pfam" id="PF18072">
    <property type="entry name" value="FGAR-AT_linker"/>
    <property type="match status" value="1"/>
</dbReference>
<dbReference type="Pfam" id="PF18076">
    <property type="entry name" value="FGAR-AT_N"/>
    <property type="match status" value="1"/>
</dbReference>
<dbReference type="Pfam" id="PF22689">
    <property type="entry name" value="FGAR-AT_PurM_N-like"/>
    <property type="match status" value="1"/>
</dbReference>
<dbReference type="Pfam" id="PF13507">
    <property type="entry name" value="GATase_5"/>
    <property type="match status" value="1"/>
</dbReference>
<dbReference type="SMART" id="SM01211">
    <property type="entry name" value="GATase_5"/>
    <property type="match status" value="1"/>
</dbReference>
<dbReference type="SUPFAM" id="SSF52317">
    <property type="entry name" value="Class I glutamine amidotransferase-like"/>
    <property type="match status" value="1"/>
</dbReference>
<dbReference type="SUPFAM" id="SSF109736">
    <property type="entry name" value="FGAM synthase PurL, linker domain"/>
    <property type="match status" value="1"/>
</dbReference>
<dbReference type="SUPFAM" id="SSF56042">
    <property type="entry name" value="PurM C-terminal domain-like"/>
    <property type="match status" value="2"/>
</dbReference>
<dbReference type="SUPFAM" id="SSF55326">
    <property type="entry name" value="PurM N-terminal domain-like"/>
    <property type="match status" value="2"/>
</dbReference>
<dbReference type="SUPFAM" id="SSF82697">
    <property type="entry name" value="PurS-like"/>
    <property type="match status" value="1"/>
</dbReference>
<dbReference type="PROSITE" id="PS51273">
    <property type="entry name" value="GATASE_TYPE_1"/>
    <property type="match status" value="1"/>
</dbReference>
<reference key="1">
    <citation type="journal article" date="2008" name="Plant Physiol.">
        <title>pur4 mutations are lethal to the male, but not the female, gametophyte and affect sporophyte development in Arabidopsis.</title>
        <authorList>
            <person name="Berthome R."/>
            <person name="Thomasset M."/>
            <person name="Maene M."/>
            <person name="Bourgeois N."/>
            <person name="Froger N."/>
            <person name="Budar F."/>
        </authorList>
    </citation>
    <scope>NUCLEOTIDE SEQUENCE [LARGE SCALE MRNA]</scope>
    <scope>DISRUPTION PHENOTYPE</scope>
    <scope>FUNCTION</scope>
    <scope>SUBCELLULAR LOCATION</scope>
</reference>
<reference key="2">
    <citation type="journal article" date="2000" name="Nature">
        <title>Sequence and analysis of chromosome 1 of the plant Arabidopsis thaliana.</title>
        <authorList>
            <person name="Theologis A."/>
            <person name="Ecker J.R."/>
            <person name="Palm C.J."/>
            <person name="Federspiel N.A."/>
            <person name="Kaul S."/>
            <person name="White O."/>
            <person name="Alonso J."/>
            <person name="Altafi H."/>
            <person name="Araujo R."/>
            <person name="Bowman C.L."/>
            <person name="Brooks S.Y."/>
            <person name="Buehler E."/>
            <person name="Chan A."/>
            <person name="Chao Q."/>
            <person name="Chen H."/>
            <person name="Cheuk R.F."/>
            <person name="Chin C.W."/>
            <person name="Chung M.K."/>
            <person name="Conn L."/>
            <person name="Conway A.B."/>
            <person name="Conway A.R."/>
            <person name="Creasy T.H."/>
            <person name="Dewar K."/>
            <person name="Dunn P."/>
            <person name="Etgu P."/>
            <person name="Feldblyum T.V."/>
            <person name="Feng J.-D."/>
            <person name="Fong B."/>
            <person name="Fujii C.Y."/>
            <person name="Gill J.E."/>
            <person name="Goldsmith A.D."/>
            <person name="Haas B."/>
            <person name="Hansen N.F."/>
            <person name="Hughes B."/>
            <person name="Huizar L."/>
            <person name="Hunter J.L."/>
            <person name="Jenkins J."/>
            <person name="Johnson-Hopson C."/>
            <person name="Khan S."/>
            <person name="Khaykin E."/>
            <person name="Kim C.J."/>
            <person name="Koo H.L."/>
            <person name="Kremenetskaia I."/>
            <person name="Kurtz D.B."/>
            <person name="Kwan A."/>
            <person name="Lam B."/>
            <person name="Langin-Hooper S."/>
            <person name="Lee A."/>
            <person name="Lee J.M."/>
            <person name="Lenz C.A."/>
            <person name="Li J.H."/>
            <person name="Li Y.-P."/>
            <person name="Lin X."/>
            <person name="Liu S.X."/>
            <person name="Liu Z.A."/>
            <person name="Luros J.S."/>
            <person name="Maiti R."/>
            <person name="Marziali A."/>
            <person name="Militscher J."/>
            <person name="Miranda M."/>
            <person name="Nguyen M."/>
            <person name="Nierman W.C."/>
            <person name="Osborne B.I."/>
            <person name="Pai G."/>
            <person name="Peterson J."/>
            <person name="Pham P.K."/>
            <person name="Rizzo M."/>
            <person name="Rooney T."/>
            <person name="Rowley D."/>
            <person name="Sakano H."/>
            <person name="Salzberg S.L."/>
            <person name="Schwartz J.R."/>
            <person name="Shinn P."/>
            <person name="Southwick A.M."/>
            <person name="Sun H."/>
            <person name="Tallon L.J."/>
            <person name="Tambunga G."/>
            <person name="Toriumi M.J."/>
            <person name="Town C.D."/>
            <person name="Utterback T."/>
            <person name="Van Aken S."/>
            <person name="Vaysberg M."/>
            <person name="Vysotskaia V.S."/>
            <person name="Walker M."/>
            <person name="Wu D."/>
            <person name="Yu G."/>
            <person name="Fraser C.M."/>
            <person name="Venter J.C."/>
            <person name="Davis R.W."/>
        </authorList>
    </citation>
    <scope>NUCLEOTIDE SEQUENCE [LARGE SCALE GENOMIC DNA]</scope>
    <source>
        <strain>cv. Columbia</strain>
    </source>
</reference>
<reference key="3">
    <citation type="journal article" date="2017" name="Plant J.">
        <title>Araport11: a complete reannotation of the Arabidopsis thaliana reference genome.</title>
        <authorList>
            <person name="Cheng C.Y."/>
            <person name="Krishnakumar V."/>
            <person name="Chan A.P."/>
            <person name="Thibaud-Nissen F."/>
            <person name="Schobel S."/>
            <person name="Town C.D."/>
        </authorList>
    </citation>
    <scope>GENOME REANNOTATION</scope>
    <source>
        <strain>cv. Columbia</strain>
    </source>
</reference>
<keyword id="KW-0067">ATP-binding</keyword>
<keyword id="KW-0150">Chloroplast</keyword>
<keyword id="KW-0315">Glutamine amidotransferase</keyword>
<keyword id="KW-0436">Ligase</keyword>
<keyword id="KW-0460">Magnesium</keyword>
<keyword id="KW-0479">Metal-binding</keyword>
<keyword id="KW-0496">Mitochondrion</keyword>
<keyword id="KW-0547">Nucleotide-binding</keyword>
<keyword id="KW-0934">Plastid</keyword>
<keyword id="KW-0658">Purine biosynthesis</keyword>
<keyword id="KW-1185">Reference proteome</keyword>
<keyword id="KW-0809">Transit peptide</keyword>
<comment type="function">
    <text evidence="3">Essential to the male gametophyte development. Phosphoribosylformylglycinamidine synthase involved in the purines biosynthetic pathway. Catalyzes the ATP-dependent conversion of formylglycinamide ribonucleotide (FGAR) and glutamine to yield formylglycinamidine ribonucleotide (FGAM) and glutamate.</text>
</comment>
<comment type="catalytic activity">
    <reaction>
        <text>N(2)-formyl-N(1)-(5-phospho-beta-D-ribosyl)glycinamide + L-glutamine + ATP + H2O = 2-formamido-N(1)-(5-O-phospho-beta-D-ribosyl)acetamidine + L-glutamate + ADP + phosphate + H(+)</text>
        <dbReference type="Rhea" id="RHEA:17129"/>
        <dbReference type="ChEBI" id="CHEBI:15377"/>
        <dbReference type="ChEBI" id="CHEBI:15378"/>
        <dbReference type="ChEBI" id="CHEBI:29985"/>
        <dbReference type="ChEBI" id="CHEBI:30616"/>
        <dbReference type="ChEBI" id="CHEBI:43474"/>
        <dbReference type="ChEBI" id="CHEBI:58359"/>
        <dbReference type="ChEBI" id="CHEBI:147286"/>
        <dbReference type="ChEBI" id="CHEBI:147287"/>
        <dbReference type="ChEBI" id="CHEBI:456216"/>
        <dbReference type="EC" id="6.3.5.3"/>
    </reaction>
</comment>
<comment type="pathway">
    <text>Purine metabolism; IMP biosynthesis via de novo pathway; 5-amino-1-(5-phospho-D-ribosyl)imidazole from N(2)-formyl-N(1)-(5-phospho-D-ribosyl)glycinamide: step 1/2.</text>
</comment>
<comment type="subcellular location">
    <subcellularLocation>
        <location evidence="3">Plastid</location>
        <location evidence="3">Chloroplast</location>
    </subcellularLocation>
    <subcellularLocation>
        <location evidence="3">Mitochondrion</location>
    </subcellularLocation>
</comment>
<comment type="disruption phenotype">
    <text evidence="3">Lethal to the male gametophyte.</text>
</comment>
<comment type="similarity">
    <text evidence="4">In the N-terminal section; belongs to the FGAMS family.</text>
</comment>
<comment type="sequence caution" evidence="4">
    <conflict type="erroneous gene model prediction">
        <sequence resource="EMBL-CDS" id="AAG52403"/>
    </conflict>
</comment>
<comment type="sequence caution" evidence="4">
    <conflict type="erroneous initiation">
        <sequence resource="EMBL-CDS" id="ABW87767"/>
    </conflict>
    <text>Truncated N-terminus.</text>
</comment>